<name>RL27_ECOSM</name>
<evidence type="ECO:0000255" key="1">
    <source>
        <dbReference type="HAMAP-Rule" id="MF_00539"/>
    </source>
</evidence>
<evidence type="ECO:0000256" key="2">
    <source>
        <dbReference type="SAM" id="MobiDB-lite"/>
    </source>
</evidence>
<evidence type="ECO:0000305" key="3"/>
<keyword id="KW-0687">Ribonucleoprotein</keyword>
<keyword id="KW-0689">Ribosomal protein</keyword>
<protein>
    <recommendedName>
        <fullName evidence="1">Large ribosomal subunit protein bL27</fullName>
    </recommendedName>
    <alternativeName>
        <fullName evidence="3">50S ribosomal protein L27</fullName>
    </alternativeName>
</protein>
<gene>
    <name evidence="1" type="primary">rpmA</name>
    <name type="ordered locus">EcSMS35_3481</name>
</gene>
<organism>
    <name type="scientific">Escherichia coli (strain SMS-3-5 / SECEC)</name>
    <dbReference type="NCBI Taxonomy" id="439855"/>
    <lineage>
        <taxon>Bacteria</taxon>
        <taxon>Pseudomonadati</taxon>
        <taxon>Pseudomonadota</taxon>
        <taxon>Gammaproteobacteria</taxon>
        <taxon>Enterobacterales</taxon>
        <taxon>Enterobacteriaceae</taxon>
        <taxon>Escherichia</taxon>
    </lineage>
</organism>
<reference key="1">
    <citation type="journal article" date="2008" name="J. Bacteriol.">
        <title>Insights into the environmental resistance gene pool from the genome sequence of the multidrug-resistant environmental isolate Escherichia coli SMS-3-5.</title>
        <authorList>
            <person name="Fricke W.F."/>
            <person name="Wright M.S."/>
            <person name="Lindell A.H."/>
            <person name="Harkins D.M."/>
            <person name="Baker-Austin C."/>
            <person name="Ravel J."/>
            <person name="Stepanauskas R."/>
        </authorList>
    </citation>
    <scope>NUCLEOTIDE SEQUENCE [LARGE SCALE GENOMIC DNA]</scope>
    <source>
        <strain>SMS-3-5 / SECEC</strain>
    </source>
</reference>
<proteinExistence type="inferred from homology"/>
<accession>B1LGF1</accession>
<feature type="chain" id="PRO_1000128748" description="Large ribosomal subunit protein bL27">
    <location>
        <begin position="1"/>
        <end position="85"/>
    </location>
</feature>
<feature type="region of interest" description="Disordered" evidence="2">
    <location>
        <begin position="1"/>
        <end position="20"/>
    </location>
</feature>
<comment type="similarity">
    <text evidence="1">Belongs to the bacterial ribosomal protein bL27 family.</text>
</comment>
<sequence length="85" mass="9124">MAHKKAGGSTRNGRDSEAKRLGVKRFGGESVLAGSIIVRQRGTKFHAGANVGCGRDHTLFAKADGKVKFEVKGPKNRKFISIEAE</sequence>
<dbReference type="EMBL" id="CP000970">
    <property type="protein sequence ID" value="ACB20019.1"/>
    <property type="molecule type" value="Genomic_DNA"/>
</dbReference>
<dbReference type="RefSeq" id="WP_000940595.1">
    <property type="nucleotide sequence ID" value="NC_010498.1"/>
</dbReference>
<dbReference type="SMR" id="B1LGF1"/>
<dbReference type="GeneID" id="93778796"/>
<dbReference type="KEGG" id="ecm:EcSMS35_3481"/>
<dbReference type="HOGENOM" id="CLU_095424_4_1_6"/>
<dbReference type="Proteomes" id="UP000007011">
    <property type="component" value="Chromosome"/>
</dbReference>
<dbReference type="GO" id="GO:0022625">
    <property type="term" value="C:cytosolic large ribosomal subunit"/>
    <property type="evidence" value="ECO:0007669"/>
    <property type="project" value="TreeGrafter"/>
</dbReference>
<dbReference type="GO" id="GO:0003735">
    <property type="term" value="F:structural constituent of ribosome"/>
    <property type="evidence" value="ECO:0007669"/>
    <property type="project" value="InterPro"/>
</dbReference>
<dbReference type="GO" id="GO:0006412">
    <property type="term" value="P:translation"/>
    <property type="evidence" value="ECO:0007669"/>
    <property type="project" value="UniProtKB-UniRule"/>
</dbReference>
<dbReference type="FunFam" id="2.40.50.100:FF:000001">
    <property type="entry name" value="50S ribosomal protein L27"/>
    <property type="match status" value="1"/>
</dbReference>
<dbReference type="Gene3D" id="2.40.50.100">
    <property type="match status" value="1"/>
</dbReference>
<dbReference type="HAMAP" id="MF_00539">
    <property type="entry name" value="Ribosomal_bL27"/>
    <property type="match status" value="1"/>
</dbReference>
<dbReference type="InterPro" id="IPR001684">
    <property type="entry name" value="Ribosomal_bL27"/>
</dbReference>
<dbReference type="InterPro" id="IPR018261">
    <property type="entry name" value="Ribosomal_bL27_CS"/>
</dbReference>
<dbReference type="NCBIfam" id="TIGR00062">
    <property type="entry name" value="L27"/>
    <property type="match status" value="1"/>
</dbReference>
<dbReference type="PANTHER" id="PTHR15893:SF0">
    <property type="entry name" value="LARGE RIBOSOMAL SUBUNIT PROTEIN BL27M"/>
    <property type="match status" value="1"/>
</dbReference>
<dbReference type="PANTHER" id="PTHR15893">
    <property type="entry name" value="RIBOSOMAL PROTEIN L27"/>
    <property type="match status" value="1"/>
</dbReference>
<dbReference type="Pfam" id="PF01016">
    <property type="entry name" value="Ribosomal_L27"/>
    <property type="match status" value="1"/>
</dbReference>
<dbReference type="PRINTS" id="PR00063">
    <property type="entry name" value="RIBOSOMALL27"/>
</dbReference>
<dbReference type="SUPFAM" id="SSF110324">
    <property type="entry name" value="Ribosomal L27 protein-like"/>
    <property type="match status" value="1"/>
</dbReference>
<dbReference type="PROSITE" id="PS00831">
    <property type="entry name" value="RIBOSOMAL_L27"/>
    <property type="match status" value="1"/>
</dbReference>